<protein>
    <recommendedName>
        <fullName evidence="1">Uracil phosphoribosyltransferase</fullName>
        <ecNumber evidence="1">2.4.2.9</ecNumber>
    </recommendedName>
    <alternativeName>
        <fullName evidence="1">UMP pyrophosphorylase</fullName>
    </alternativeName>
    <alternativeName>
        <fullName evidence="1">UPRTase</fullName>
    </alternativeName>
</protein>
<gene>
    <name evidence="1" type="primary">upp</name>
    <name type="ordered locus">PBPRA2909</name>
</gene>
<reference key="1">
    <citation type="journal article" date="2005" name="Science">
        <title>Life at depth: Photobacterium profundum genome sequence and expression analysis.</title>
        <authorList>
            <person name="Vezzi A."/>
            <person name="Campanaro S."/>
            <person name="D'Angelo M."/>
            <person name="Simonato F."/>
            <person name="Vitulo N."/>
            <person name="Lauro F.M."/>
            <person name="Cestaro A."/>
            <person name="Malacrida G."/>
            <person name="Simionati B."/>
            <person name="Cannata N."/>
            <person name="Romualdi C."/>
            <person name="Bartlett D.H."/>
            <person name="Valle G."/>
        </authorList>
    </citation>
    <scope>NUCLEOTIDE SEQUENCE [LARGE SCALE GENOMIC DNA]</scope>
    <source>
        <strain>ATCC BAA-1253 / SS9</strain>
    </source>
</reference>
<evidence type="ECO:0000255" key="1">
    <source>
        <dbReference type="HAMAP-Rule" id="MF_01218"/>
    </source>
</evidence>
<name>UPP_PHOPR</name>
<accession>Q6LN74</accession>
<comment type="function">
    <text evidence="1">Catalyzes the conversion of uracil and 5-phospho-alpha-D-ribose 1-diphosphate (PRPP) to UMP and diphosphate.</text>
</comment>
<comment type="catalytic activity">
    <reaction evidence="1">
        <text>UMP + diphosphate = 5-phospho-alpha-D-ribose 1-diphosphate + uracil</text>
        <dbReference type="Rhea" id="RHEA:13017"/>
        <dbReference type="ChEBI" id="CHEBI:17568"/>
        <dbReference type="ChEBI" id="CHEBI:33019"/>
        <dbReference type="ChEBI" id="CHEBI:57865"/>
        <dbReference type="ChEBI" id="CHEBI:58017"/>
        <dbReference type="EC" id="2.4.2.9"/>
    </reaction>
</comment>
<comment type="cofactor">
    <cofactor evidence="1">
        <name>Mg(2+)</name>
        <dbReference type="ChEBI" id="CHEBI:18420"/>
    </cofactor>
    <text evidence="1">Binds 1 Mg(2+) ion per subunit. The magnesium is bound as Mg-PRPP.</text>
</comment>
<comment type="activity regulation">
    <text evidence="1">Allosterically activated by GTP.</text>
</comment>
<comment type="pathway">
    <text evidence="1">Pyrimidine metabolism; UMP biosynthesis via salvage pathway; UMP from uracil: step 1/1.</text>
</comment>
<comment type="similarity">
    <text evidence="1">Belongs to the UPRTase family.</text>
</comment>
<organism>
    <name type="scientific">Photobacterium profundum (strain SS9)</name>
    <dbReference type="NCBI Taxonomy" id="298386"/>
    <lineage>
        <taxon>Bacteria</taxon>
        <taxon>Pseudomonadati</taxon>
        <taxon>Pseudomonadota</taxon>
        <taxon>Gammaproteobacteria</taxon>
        <taxon>Vibrionales</taxon>
        <taxon>Vibrionaceae</taxon>
        <taxon>Photobacterium</taxon>
    </lineage>
</organism>
<proteinExistence type="inferred from homology"/>
<dbReference type="EC" id="2.4.2.9" evidence="1"/>
<dbReference type="EMBL" id="CR378672">
    <property type="protein sequence ID" value="CAG21252.1"/>
    <property type="molecule type" value="Genomic_DNA"/>
</dbReference>
<dbReference type="RefSeq" id="WP_011219520.1">
    <property type="nucleotide sequence ID" value="NC_006370.1"/>
</dbReference>
<dbReference type="SMR" id="Q6LN74"/>
<dbReference type="STRING" id="298386.PBPRA2909"/>
<dbReference type="KEGG" id="ppr:PBPRA2909"/>
<dbReference type="eggNOG" id="COG0035">
    <property type="taxonomic scope" value="Bacteria"/>
</dbReference>
<dbReference type="HOGENOM" id="CLU_067096_2_2_6"/>
<dbReference type="UniPathway" id="UPA00574">
    <property type="reaction ID" value="UER00636"/>
</dbReference>
<dbReference type="Proteomes" id="UP000000593">
    <property type="component" value="Chromosome 1"/>
</dbReference>
<dbReference type="GO" id="GO:0005525">
    <property type="term" value="F:GTP binding"/>
    <property type="evidence" value="ECO:0007669"/>
    <property type="project" value="UniProtKB-KW"/>
</dbReference>
<dbReference type="GO" id="GO:0000287">
    <property type="term" value="F:magnesium ion binding"/>
    <property type="evidence" value="ECO:0007669"/>
    <property type="project" value="UniProtKB-UniRule"/>
</dbReference>
<dbReference type="GO" id="GO:0004845">
    <property type="term" value="F:uracil phosphoribosyltransferase activity"/>
    <property type="evidence" value="ECO:0007669"/>
    <property type="project" value="UniProtKB-UniRule"/>
</dbReference>
<dbReference type="GO" id="GO:0044206">
    <property type="term" value="P:UMP salvage"/>
    <property type="evidence" value="ECO:0007669"/>
    <property type="project" value="UniProtKB-UniRule"/>
</dbReference>
<dbReference type="GO" id="GO:0006223">
    <property type="term" value="P:uracil salvage"/>
    <property type="evidence" value="ECO:0007669"/>
    <property type="project" value="InterPro"/>
</dbReference>
<dbReference type="CDD" id="cd06223">
    <property type="entry name" value="PRTases_typeI"/>
    <property type="match status" value="1"/>
</dbReference>
<dbReference type="FunFam" id="3.40.50.2020:FF:000003">
    <property type="entry name" value="Uracil phosphoribosyltransferase"/>
    <property type="match status" value="1"/>
</dbReference>
<dbReference type="Gene3D" id="3.40.50.2020">
    <property type="match status" value="1"/>
</dbReference>
<dbReference type="HAMAP" id="MF_01218_B">
    <property type="entry name" value="Upp_B"/>
    <property type="match status" value="1"/>
</dbReference>
<dbReference type="InterPro" id="IPR000836">
    <property type="entry name" value="PRibTrfase_dom"/>
</dbReference>
<dbReference type="InterPro" id="IPR029057">
    <property type="entry name" value="PRTase-like"/>
</dbReference>
<dbReference type="InterPro" id="IPR034332">
    <property type="entry name" value="Upp_B"/>
</dbReference>
<dbReference type="InterPro" id="IPR050054">
    <property type="entry name" value="UPRTase/APRTase"/>
</dbReference>
<dbReference type="InterPro" id="IPR005765">
    <property type="entry name" value="Ura_phspho_trans"/>
</dbReference>
<dbReference type="NCBIfam" id="NF001097">
    <property type="entry name" value="PRK00129.1"/>
    <property type="match status" value="1"/>
</dbReference>
<dbReference type="NCBIfam" id="TIGR01091">
    <property type="entry name" value="upp"/>
    <property type="match status" value="1"/>
</dbReference>
<dbReference type="PANTHER" id="PTHR32315">
    <property type="entry name" value="ADENINE PHOSPHORIBOSYLTRANSFERASE"/>
    <property type="match status" value="1"/>
</dbReference>
<dbReference type="PANTHER" id="PTHR32315:SF4">
    <property type="entry name" value="URACIL PHOSPHORIBOSYLTRANSFERASE, CHLOROPLASTIC"/>
    <property type="match status" value="1"/>
</dbReference>
<dbReference type="Pfam" id="PF14681">
    <property type="entry name" value="UPRTase"/>
    <property type="match status" value="1"/>
</dbReference>
<dbReference type="SUPFAM" id="SSF53271">
    <property type="entry name" value="PRTase-like"/>
    <property type="match status" value="1"/>
</dbReference>
<feature type="chain" id="PRO_0000120866" description="Uracil phosphoribosyltransferase">
    <location>
        <begin position="1"/>
        <end position="208"/>
    </location>
</feature>
<feature type="binding site" evidence="1">
    <location>
        <position position="78"/>
    </location>
    <ligand>
        <name>5-phospho-alpha-D-ribose 1-diphosphate</name>
        <dbReference type="ChEBI" id="CHEBI:58017"/>
    </ligand>
</feature>
<feature type="binding site" evidence="1">
    <location>
        <position position="103"/>
    </location>
    <ligand>
        <name>5-phospho-alpha-D-ribose 1-diphosphate</name>
        <dbReference type="ChEBI" id="CHEBI:58017"/>
    </ligand>
</feature>
<feature type="binding site" evidence="1">
    <location>
        <begin position="130"/>
        <end position="138"/>
    </location>
    <ligand>
        <name>5-phospho-alpha-D-ribose 1-diphosphate</name>
        <dbReference type="ChEBI" id="CHEBI:58017"/>
    </ligand>
</feature>
<feature type="binding site" evidence="1">
    <location>
        <position position="193"/>
    </location>
    <ligand>
        <name>uracil</name>
        <dbReference type="ChEBI" id="CHEBI:17568"/>
    </ligand>
</feature>
<feature type="binding site" evidence="1">
    <location>
        <begin position="198"/>
        <end position="200"/>
    </location>
    <ligand>
        <name>uracil</name>
        <dbReference type="ChEBI" id="CHEBI:17568"/>
    </ligand>
</feature>
<feature type="binding site" evidence="1">
    <location>
        <position position="199"/>
    </location>
    <ligand>
        <name>5-phospho-alpha-D-ribose 1-diphosphate</name>
        <dbReference type="ChEBI" id="CHEBI:58017"/>
    </ligand>
</feature>
<keyword id="KW-0021">Allosteric enzyme</keyword>
<keyword id="KW-0328">Glycosyltransferase</keyword>
<keyword id="KW-0342">GTP-binding</keyword>
<keyword id="KW-0460">Magnesium</keyword>
<keyword id="KW-0547">Nucleotide-binding</keyword>
<keyword id="KW-1185">Reference proteome</keyword>
<keyword id="KW-0808">Transferase</keyword>
<sequence>MKVVEVKHPLIKHKIGLMREGDISTKRFRELATEVGSLLTYEATADFETEKVTIEGWNGPVEIDQIKGKKVTVVPILRAGLGMMDGVLEHVPSARISVVGVYRDEETLEPVPYFNKLASNIDERIALVVDPMLATGGSMIATLDLLKENGCKQFKVLVLVAAPEGIAALEKAHPDVELYTAAIDEKLNDKGYIIPGLGDAGDKIFGTK</sequence>